<geneLocation type="chloroplast"/>
<evidence type="ECO:0000255" key="1">
    <source>
        <dbReference type="HAMAP-Rule" id="MF_01317"/>
    </source>
</evidence>
<comment type="function">
    <text evidence="1">One of the components of the core complex of photosystem II (PSII). PSII is a light-driven water:plastoquinone oxidoreductase that uses light energy to abstract electrons from H(2)O, generating O(2) and a proton gradient subsequently used for ATP formation. It consists of a core antenna complex that captures photons, and an electron transfer chain that converts photonic excitation into a charge separation. This subunit is found at the monomer-monomer interface and is required for correct PSII assembly and/or dimerization.</text>
</comment>
<comment type="subunit">
    <text evidence="1">PSII is composed of 1 copy each of membrane proteins PsbA, PsbB, PsbC, PsbD, PsbE, PsbF, PsbH, PsbI, PsbJ, PsbK, PsbL, PsbM, PsbT, PsbX, PsbY, PsbZ, Psb30/Ycf12, at least 3 peripheral proteins of the oxygen-evolving complex and a large number of cofactors. It forms dimeric complexes.</text>
</comment>
<comment type="subcellular location">
    <subcellularLocation>
        <location evidence="1">Plastid</location>
        <location evidence="1">Chloroplast thylakoid membrane</location>
        <topology evidence="1">Single-pass membrane protein</topology>
    </subcellularLocation>
</comment>
<comment type="similarity">
    <text evidence="1">Belongs to the PsbL family.</text>
</comment>
<dbReference type="EMBL" id="AF528865">
    <property type="protein sequence ID" value="AAQ09260.1"/>
    <property type="molecule type" value="Genomic_DNA"/>
</dbReference>
<dbReference type="SMR" id="Q6EYW2"/>
<dbReference type="GO" id="GO:0009535">
    <property type="term" value="C:chloroplast thylakoid membrane"/>
    <property type="evidence" value="ECO:0007669"/>
    <property type="project" value="UniProtKB-SubCell"/>
</dbReference>
<dbReference type="GO" id="GO:0009539">
    <property type="term" value="C:photosystem II reaction center"/>
    <property type="evidence" value="ECO:0007669"/>
    <property type="project" value="InterPro"/>
</dbReference>
<dbReference type="GO" id="GO:0015979">
    <property type="term" value="P:photosynthesis"/>
    <property type="evidence" value="ECO:0007669"/>
    <property type="project" value="UniProtKB-UniRule"/>
</dbReference>
<dbReference type="HAMAP" id="MF_01317">
    <property type="entry name" value="PSII_PsbL"/>
    <property type="match status" value="1"/>
</dbReference>
<dbReference type="InterPro" id="IPR003372">
    <property type="entry name" value="PSII_PsbL"/>
</dbReference>
<dbReference type="InterPro" id="IPR037266">
    <property type="entry name" value="PSII_PsbL_sf"/>
</dbReference>
<dbReference type="NCBIfam" id="NF001972">
    <property type="entry name" value="PRK00753.1"/>
    <property type="match status" value="1"/>
</dbReference>
<dbReference type="Pfam" id="PF02419">
    <property type="entry name" value="PsbL"/>
    <property type="match status" value="1"/>
</dbReference>
<dbReference type="SUPFAM" id="SSF161017">
    <property type="entry name" value="Photosystem II reaction center protein L, PsbL"/>
    <property type="match status" value="1"/>
</dbReference>
<reference key="1">
    <citation type="submission" date="2002-07" db="EMBL/GenBank/DDBJ databases">
        <title>Parsing out signal and noise for seed-plant phylogenetic inference.</title>
        <authorList>
            <person name="Graham S.W."/>
            <person name="Rai H.S."/>
            <person name="Ikegami K."/>
            <person name="Reeves P.A."/>
            <person name="Olmstead R.G."/>
        </authorList>
    </citation>
    <scope>NUCLEOTIDE SEQUENCE [GENOMIC DNA]</scope>
</reference>
<keyword id="KW-0150">Chloroplast</keyword>
<keyword id="KW-0472">Membrane</keyword>
<keyword id="KW-0602">Photosynthesis</keyword>
<keyword id="KW-0604">Photosystem II</keyword>
<keyword id="KW-0934">Plastid</keyword>
<keyword id="KW-0674">Reaction center</keyword>
<keyword id="KW-0793">Thylakoid</keyword>
<keyword id="KW-0812">Transmembrane</keyword>
<keyword id="KW-1133">Transmembrane helix</keyword>
<sequence>MTQSNPNEQNVELNRTSLYWGLLLIFVLAVLFSNYFFN</sequence>
<gene>
    <name evidence="1" type="primary">psbL</name>
</gene>
<accession>Q6EYW2</accession>
<name>PSBL_AGARO</name>
<feature type="chain" id="PRO_0000219673" description="Photosystem II reaction center protein L">
    <location>
        <begin position="1"/>
        <end position="38"/>
    </location>
</feature>
<feature type="transmembrane region" description="Helical" evidence="1">
    <location>
        <begin position="17"/>
        <end position="37"/>
    </location>
</feature>
<organism>
    <name type="scientific">Agathis robusta</name>
    <name type="common">Queensland kauri pine</name>
    <dbReference type="NCBI Taxonomy" id="60854"/>
    <lineage>
        <taxon>Eukaryota</taxon>
        <taxon>Viridiplantae</taxon>
        <taxon>Streptophyta</taxon>
        <taxon>Embryophyta</taxon>
        <taxon>Tracheophyta</taxon>
        <taxon>Spermatophyta</taxon>
        <taxon>Pinopsida</taxon>
        <taxon>Pinidae</taxon>
        <taxon>Conifers II</taxon>
        <taxon>Araucariales</taxon>
        <taxon>Araucariaceae</taxon>
        <taxon>Agathis</taxon>
    </lineage>
</organism>
<proteinExistence type="inferred from homology"/>
<protein>
    <recommendedName>
        <fullName evidence="1">Photosystem II reaction center protein L</fullName>
        <shortName evidence="1">PSII-L</shortName>
    </recommendedName>
</protein>